<protein>
    <recommendedName>
        <fullName evidence="1">Tryptophan synthase alpha chain</fullName>
        <ecNumber evidence="1">4.2.1.20</ecNumber>
    </recommendedName>
</protein>
<organism>
    <name type="scientific">Corynebacterium glutamicum (strain R)</name>
    <dbReference type="NCBI Taxonomy" id="340322"/>
    <lineage>
        <taxon>Bacteria</taxon>
        <taxon>Bacillati</taxon>
        <taxon>Actinomycetota</taxon>
        <taxon>Actinomycetes</taxon>
        <taxon>Mycobacteriales</taxon>
        <taxon>Corynebacteriaceae</taxon>
        <taxon>Corynebacterium</taxon>
    </lineage>
</organism>
<evidence type="ECO:0000255" key="1">
    <source>
        <dbReference type="HAMAP-Rule" id="MF_00131"/>
    </source>
</evidence>
<feature type="chain" id="PRO_1000018191" description="Tryptophan synthase alpha chain">
    <location>
        <begin position="1"/>
        <end position="280"/>
    </location>
</feature>
<feature type="active site" description="Proton acceptor" evidence="1">
    <location>
        <position position="49"/>
    </location>
</feature>
<feature type="active site" description="Proton acceptor" evidence="1">
    <location>
        <position position="60"/>
    </location>
</feature>
<sequence>MSRYDDLFARLDTAGEGAFVPFIMLSDPSPEEAFQIISTAIEAGADALELGVPFSDPVADGPTVAESHLRALDGGATVDSALEQIKRVRAAYPEVPIGMLIYGNVPFTRGLDRFYQEFAEAGADSILLPDVPVREGAPFSAAAAAAGIDPIYIAPANASEKTLEGVSAASKGYIYAISRDGVTGTERESSTDGLSAVVDNIKKFDGAPIFLGFGISSPQHVADAIAAGASGAITGSAITKIIASHCEGEHPNPSTIRDMDGLKKDLTEFISAMKAATKKV</sequence>
<reference key="1">
    <citation type="journal article" date="2007" name="Microbiology">
        <title>Comparative analysis of the Corynebacterium glutamicum group and complete genome sequence of strain R.</title>
        <authorList>
            <person name="Yukawa H."/>
            <person name="Omumasaba C.A."/>
            <person name="Nonaka H."/>
            <person name="Kos P."/>
            <person name="Okai N."/>
            <person name="Suzuki N."/>
            <person name="Suda M."/>
            <person name="Tsuge Y."/>
            <person name="Watanabe J."/>
            <person name="Ikeda Y."/>
            <person name="Vertes A.A."/>
            <person name="Inui M."/>
        </authorList>
    </citation>
    <scope>NUCLEOTIDE SEQUENCE [LARGE SCALE GENOMIC DNA]</scope>
    <source>
        <strain>R</strain>
    </source>
</reference>
<dbReference type="EC" id="4.2.1.20" evidence="1"/>
<dbReference type="EMBL" id="AP009044">
    <property type="protein sequence ID" value="BAF55943.1"/>
    <property type="molecule type" value="Genomic_DNA"/>
</dbReference>
<dbReference type="RefSeq" id="WP_011898117.1">
    <property type="nucleotide sequence ID" value="NC_009342.1"/>
</dbReference>
<dbReference type="SMR" id="A4QI77"/>
<dbReference type="KEGG" id="cgt:cgR_2921"/>
<dbReference type="HOGENOM" id="CLU_016734_0_4_11"/>
<dbReference type="PhylomeDB" id="A4QI77"/>
<dbReference type="UniPathway" id="UPA00035">
    <property type="reaction ID" value="UER00044"/>
</dbReference>
<dbReference type="Proteomes" id="UP000006698">
    <property type="component" value="Chromosome"/>
</dbReference>
<dbReference type="GO" id="GO:0005829">
    <property type="term" value="C:cytosol"/>
    <property type="evidence" value="ECO:0007669"/>
    <property type="project" value="TreeGrafter"/>
</dbReference>
<dbReference type="GO" id="GO:0004834">
    <property type="term" value="F:tryptophan synthase activity"/>
    <property type="evidence" value="ECO:0007669"/>
    <property type="project" value="UniProtKB-UniRule"/>
</dbReference>
<dbReference type="CDD" id="cd04724">
    <property type="entry name" value="Tryptophan_synthase_alpha"/>
    <property type="match status" value="1"/>
</dbReference>
<dbReference type="FunFam" id="3.20.20.70:FF:000037">
    <property type="entry name" value="Tryptophan synthase alpha chain"/>
    <property type="match status" value="1"/>
</dbReference>
<dbReference type="Gene3D" id="3.20.20.70">
    <property type="entry name" value="Aldolase class I"/>
    <property type="match status" value="1"/>
</dbReference>
<dbReference type="HAMAP" id="MF_00131">
    <property type="entry name" value="Trp_synth_alpha"/>
    <property type="match status" value="1"/>
</dbReference>
<dbReference type="InterPro" id="IPR013785">
    <property type="entry name" value="Aldolase_TIM"/>
</dbReference>
<dbReference type="InterPro" id="IPR011060">
    <property type="entry name" value="RibuloseP-bd_barrel"/>
</dbReference>
<dbReference type="InterPro" id="IPR018204">
    <property type="entry name" value="Trp_synthase_alpha_AS"/>
</dbReference>
<dbReference type="InterPro" id="IPR002028">
    <property type="entry name" value="Trp_synthase_suA"/>
</dbReference>
<dbReference type="NCBIfam" id="TIGR00262">
    <property type="entry name" value="trpA"/>
    <property type="match status" value="1"/>
</dbReference>
<dbReference type="PANTHER" id="PTHR43406:SF1">
    <property type="entry name" value="TRYPTOPHAN SYNTHASE ALPHA CHAIN, CHLOROPLASTIC"/>
    <property type="match status" value="1"/>
</dbReference>
<dbReference type="PANTHER" id="PTHR43406">
    <property type="entry name" value="TRYPTOPHAN SYNTHASE, ALPHA CHAIN"/>
    <property type="match status" value="1"/>
</dbReference>
<dbReference type="Pfam" id="PF00290">
    <property type="entry name" value="Trp_syntA"/>
    <property type="match status" value="1"/>
</dbReference>
<dbReference type="SUPFAM" id="SSF51366">
    <property type="entry name" value="Ribulose-phoshate binding barrel"/>
    <property type="match status" value="1"/>
</dbReference>
<dbReference type="PROSITE" id="PS00167">
    <property type="entry name" value="TRP_SYNTHASE_ALPHA"/>
    <property type="match status" value="1"/>
</dbReference>
<name>TRPA_CORGB</name>
<proteinExistence type="inferred from homology"/>
<gene>
    <name evidence="1" type="primary">trpA</name>
    <name type="ordered locus">cgR_2921</name>
</gene>
<comment type="function">
    <text evidence="1">The alpha subunit is responsible for the aldol cleavage of indoleglycerol phosphate to indole and glyceraldehyde 3-phosphate.</text>
</comment>
<comment type="catalytic activity">
    <reaction evidence="1">
        <text>(1S,2R)-1-C-(indol-3-yl)glycerol 3-phosphate + L-serine = D-glyceraldehyde 3-phosphate + L-tryptophan + H2O</text>
        <dbReference type="Rhea" id="RHEA:10532"/>
        <dbReference type="ChEBI" id="CHEBI:15377"/>
        <dbReference type="ChEBI" id="CHEBI:33384"/>
        <dbReference type="ChEBI" id="CHEBI:57912"/>
        <dbReference type="ChEBI" id="CHEBI:58866"/>
        <dbReference type="ChEBI" id="CHEBI:59776"/>
        <dbReference type="EC" id="4.2.1.20"/>
    </reaction>
</comment>
<comment type="pathway">
    <text evidence="1">Amino-acid biosynthesis; L-tryptophan biosynthesis; L-tryptophan from chorismate: step 5/5.</text>
</comment>
<comment type="subunit">
    <text evidence="1">Tetramer of two alpha and two beta chains.</text>
</comment>
<comment type="similarity">
    <text evidence="1">Belongs to the TrpA family.</text>
</comment>
<accession>A4QI77</accession>
<keyword id="KW-0028">Amino-acid biosynthesis</keyword>
<keyword id="KW-0057">Aromatic amino acid biosynthesis</keyword>
<keyword id="KW-0456">Lyase</keyword>
<keyword id="KW-0822">Tryptophan biosynthesis</keyword>